<reference key="1">
    <citation type="submission" date="2007-04" db="EMBL/GenBank/DDBJ databases">
        <title>Complete sequence of chromosome of Rhodobacter sphaeroides ATCC 17025.</title>
        <authorList>
            <consortium name="US DOE Joint Genome Institute"/>
            <person name="Copeland A."/>
            <person name="Lucas S."/>
            <person name="Lapidus A."/>
            <person name="Barry K."/>
            <person name="Detter J.C."/>
            <person name="Glavina del Rio T."/>
            <person name="Hammon N."/>
            <person name="Israni S."/>
            <person name="Dalin E."/>
            <person name="Tice H."/>
            <person name="Pitluck S."/>
            <person name="Chertkov O."/>
            <person name="Brettin T."/>
            <person name="Bruce D."/>
            <person name="Han C."/>
            <person name="Schmutz J."/>
            <person name="Larimer F."/>
            <person name="Land M."/>
            <person name="Hauser L."/>
            <person name="Kyrpides N."/>
            <person name="Kim E."/>
            <person name="Richardson P."/>
            <person name="Mackenzie C."/>
            <person name="Choudhary M."/>
            <person name="Donohue T.J."/>
            <person name="Kaplan S."/>
        </authorList>
    </citation>
    <scope>NUCLEOTIDE SEQUENCE [LARGE SCALE GENOMIC DNA]</scope>
    <source>
        <strain>ATCC 17025 / ATH 2.4.3</strain>
    </source>
</reference>
<protein>
    <recommendedName>
        <fullName evidence="1">Large ribosomal subunit protein bL35</fullName>
    </recommendedName>
    <alternativeName>
        <fullName evidence="2">50S ribosomal protein L35</fullName>
    </alternativeName>
</protein>
<feature type="chain" id="PRO_1000050754" description="Large ribosomal subunit protein bL35">
    <location>
        <begin position="1"/>
        <end position="66"/>
    </location>
</feature>
<gene>
    <name evidence="1" type="primary">rpmI</name>
    <name type="ordered locus">Rsph17025_2487</name>
</gene>
<evidence type="ECO:0000255" key="1">
    <source>
        <dbReference type="HAMAP-Rule" id="MF_00514"/>
    </source>
</evidence>
<evidence type="ECO:0000305" key="2"/>
<organism>
    <name type="scientific">Cereibacter sphaeroides (strain ATCC 17025 / ATH 2.4.3)</name>
    <name type="common">Rhodobacter sphaeroides</name>
    <dbReference type="NCBI Taxonomy" id="349102"/>
    <lineage>
        <taxon>Bacteria</taxon>
        <taxon>Pseudomonadati</taxon>
        <taxon>Pseudomonadota</taxon>
        <taxon>Alphaproteobacteria</taxon>
        <taxon>Rhodobacterales</taxon>
        <taxon>Paracoccaceae</taxon>
        <taxon>Cereibacter</taxon>
    </lineage>
</organism>
<name>RL35_CERS5</name>
<keyword id="KW-0687">Ribonucleoprotein</keyword>
<keyword id="KW-0689">Ribosomal protein</keyword>
<proteinExistence type="inferred from homology"/>
<sequence>MPKMKTKSAAKKRFSFTATGKVKAGPAGKRHGMIKRSTKFIRDVTGTMILSDADAKIVKKYMPYDR</sequence>
<accession>A4WVG1</accession>
<dbReference type="EMBL" id="CP000661">
    <property type="protein sequence ID" value="ABP71375.1"/>
    <property type="molecule type" value="Genomic_DNA"/>
</dbReference>
<dbReference type="SMR" id="A4WVG1"/>
<dbReference type="STRING" id="349102.Rsph17025_2487"/>
<dbReference type="KEGG" id="rsq:Rsph17025_2487"/>
<dbReference type="eggNOG" id="COG0291">
    <property type="taxonomic scope" value="Bacteria"/>
</dbReference>
<dbReference type="HOGENOM" id="CLU_169643_2_1_5"/>
<dbReference type="BioCyc" id="RSPH349102:G1G8M-2565-MONOMER"/>
<dbReference type="GO" id="GO:0022625">
    <property type="term" value="C:cytosolic large ribosomal subunit"/>
    <property type="evidence" value="ECO:0007669"/>
    <property type="project" value="TreeGrafter"/>
</dbReference>
<dbReference type="GO" id="GO:0003735">
    <property type="term" value="F:structural constituent of ribosome"/>
    <property type="evidence" value="ECO:0007669"/>
    <property type="project" value="InterPro"/>
</dbReference>
<dbReference type="GO" id="GO:0006412">
    <property type="term" value="P:translation"/>
    <property type="evidence" value="ECO:0007669"/>
    <property type="project" value="UniProtKB-UniRule"/>
</dbReference>
<dbReference type="FunFam" id="4.10.410.60:FF:000001">
    <property type="entry name" value="50S ribosomal protein L35"/>
    <property type="match status" value="1"/>
</dbReference>
<dbReference type="Gene3D" id="4.10.410.60">
    <property type="match status" value="1"/>
</dbReference>
<dbReference type="HAMAP" id="MF_00514">
    <property type="entry name" value="Ribosomal_bL35"/>
    <property type="match status" value="1"/>
</dbReference>
<dbReference type="InterPro" id="IPR001706">
    <property type="entry name" value="Ribosomal_bL35"/>
</dbReference>
<dbReference type="InterPro" id="IPR021137">
    <property type="entry name" value="Ribosomal_bL35-like"/>
</dbReference>
<dbReference type="InterPro" id="IPR018265">
    <property type="entry name" value="Ribosomal_bL35_CS"/>
</dbReference>
<dbReference type="InterPro" id="IPR037229">
    <property type="entry name" value="Ribosomal_bL35_sf"/>
</dbReference>
<dbReference type="NCBIfam" id="TIGR00001">
    <property type="entry name" value="rpmI_bact"/>
    <property type="match status" value="1"/>
</dbReference>
<dbReference type="PANTHER" id="PTHR33343">
    <property type="entry name" value="54S RIBOSOMAL PROTEIN BL35M"/>
    <property type="match status" value="1"/>
</dbReference>
<dbReference type="PANTHER" id="PTHR33343:SF1">
    <property type="entry name" value="LARGE RIBOSOMAL SUBUNIT PROTEIN BL35M"/>
    <property type="match status" value="1"/>
</dbReference>
<dbReference type="Pfam" id="PF01632">
    <property type="entry name" value="Ribosomal_L35p"/>
    <property type="match status" value="1"/>
</dbReference>
<dbReference type="PRINTS" id="PR00064">
    <property type="entry name" value="RIBOSOMALL35"/>
</dbReference>
<dbReference type="SUPFAM" id="SSF143034">
    <property type="entry name" value="L35p-like"/>
    <property type="match status" value="1"/>
</dbReference>
<dbReference type="PROSITE" id="PS00936">
    <property type="entry name" value="RIBOSOMAL_L35"/>
    <property type="match status" value="1"/>
</dbReference>
<comment type="similarity">
    <text evidence="1">Belongs to the bacterial ribosomal protein bL35 family.</text>
</comment>